<keyword id="KW-1003">Cell membrane</keyword>
<keyword id="KW-0472">Membrane</keyword>
<keyword id="KW-0520">NAD</keyword>
<keyword id="KW-0874">Quinone</keyword>
<keyword id="KW-1185">Reference proteome</keyword>
<keyword id="KW-1278">Translocase</keyword>
<keyword id="KW-0812">Transmembrane</keyword>
<keyword id="KW-1133">Transmembrane helix</keyword>
<keyword id="KW-0830">Ubiquinone</keyword>
<comment type="function">
    <text evidence="1">NDH-1 shuttles electrons from NADH, via FMN and iron-sulfur (Fe-S) centers, to quinones in the respiratory chain. The immediate electron acceptor for the enzyme in this species is believed to be ubiquinone. Couples the redox reaction to proton translocation (for every two electrons transferred, four hydrogen ions are translocated across the cytoplasmic membrane), and thus conserves the redox energy in a proton gradient. This subunit may bind ubiquinone.</text>
</comment>
<comment type="catalytic activity">
    <reaction evidence="1">
        <text>a quinone + NADH + 5 H(+)(in) = a quinol + NAD(+) + 4 H(+)(out)</text>
        <dbReference type="Rhea" id="RHEA:57888"/>
        <dbReference type="ChEBI" id="CHEBI:15378"/>
        <dbReference type="ChEBI" id="CHEBI:24646"/>
        <dbReference type="ChEBI" id="CHEBI:57540"/>
        <dbReference type="ChEBI" id="CHEBI:57945"/>
        <dbReference type="ChEBI" id="CHEBI:132124"/>
    </reaction>
</comment>
<comment type="subunit">
    <text evidence="1">NDH-1 is composed of 13 different subunits. Subunits NuoA, H, J, K, L, M, N constitute the membrane sector of the complex.</text>
</comment>
<comment type="subcellular location">
    <subcellularLocation>
        <location>Cell membrane</location>
        <topology>Multi-pass membrane protein</topology>
    </subcellularLocation>
</comment>
<comment type="similarity">
    <text evidence="1">Belongs to the complex I subunit 1 family.</text>
</comment>
<proteinExistence type="inferred from homology"/>
<protein>
    <recommendedName>
        <fullName evidence="1">NADH-quinone oxidoreductase subunit H</fullName>
        <ecNumber evidence="1">7.1.1.-</ecNumber>
    </recommendedName>
    <alternativeName>
        <fullName evidence="1">NADH dehydrogenase I subunit H</fullName>
    </alternativeName>
    <alternativeName>
        <fullName evidence="1">NDH-1 subunit H</fullName>
    </alternativeName>
</protein>
<name>NUOH_BUCBP</name>
<sequence length="322" mass="36489">MIFLPISSIETKTYIFQSIVILVCVLITASIMSVVERRVLGLLQNRYGPNRVGWQGTLQVVADMIKLFFKEDWIPTFSKKITFLIAPILAFISLLLVITIIPLSPSIVIVNLDIGVLFFLMMASLSVYSVLLAGWSSNNKYALLGSIRATAQTLSYEVFLGLSCMGVVARAKSFNMIDIVDSQIGLWNIIPQFFGFLAFFIAGLALCHRHPFDQPESEQELADGYHIEYSSIKFGLFFIGEYISIIVVSSLISTMFFGGWLGPLFPSYFWFILKTLCFMMIFILIRASLPRPRYDKMMLFGWKVCFPLTLINLIFTALIMLY</sequence>
<evidence type="ECO:0000255" key="1">
    <source>
        <dbReference type="HAMAP-Rule" id="MF_01350"/>
    </source>
</evidence>
<accession>Q89AU0</accession>
<organism>
    <name type="scientific">Buchnera aphidicola subsp. Baizongia pistaciae (strain Bp)</name>
    <dbReference type="NCBI Taxonomy" id="224915"/>
    <lineage>
        <taxon>Bacteria</taxon>
        <taxon>Pseudomonadati</taxon>
        <taxon>Pseudomonadota</taxon>
        <taxon>Gammaproteobacteria</taxon>
        <taxon>Enterobacterales</taxon>
        <taxon>Erwiniaceae</taxon>
        <taxon>Buchnera</taxon>
    </lineage>
</organism>
<reference key="1">
    <citation type="journal article" date="2003" name="Proc. Natl. Acad. Sci. U.S.A.">
        <title>Reductive genome evolution in Buchnera aphidicola.</title>
        <authorList>
            <person name="van Ham R.C.H.J."/>
            <person name="Kamerbeek J."/>
            <person name="Palacios C."/>
            <person name="Rausell C."/>
            <person name="Abascal F."/>
            <person name="Bastolla U."/>
            <person name="Fernandez J.M."/>
            <person name="Jimenez L."/>
            <person name="Postigo M."/>
            <person name="Silva F.J."/>
            <person name="Tamames J."/>
            <person name="Viguera E."/>
            <person name="Latorre A."/>
            <person name="Valencia A."/>
            <person name="Moran F."/>
            <person name="Moya A."/>
        </authorList>
    </citation>
    <scope>NUCLEOTIDE SEQUENCE [LARGE SCALE GENOMIC DNA]</scope>
    <source>
        <strain>Bp</strain>
    </source>
</reference>
<gene>
    <name evidence="1" type="primary">nuoH</name>
    <name type="ordered locus">bbp_149</name>
</gene>
<feature type="chain" id="PRO_0000117528" description="NADH-quinone oxidoreductase subunit H">
    <location>
        <begin position="1"/>
        <end position="322"/>
    </location>
</feature>
<feature type="transmembrane region" description="Helical" evidence="1">
    <location>
        <begin position="15"/>
        <end position="35"/>
    </location>
</feature>
<feature type="transmembrane region" description="Helical" evidence="1">
    <location>
        <begin position="81"/>
        <end position="101"/>
    </location>
</feature>
<feature type="transmembrane region" description="Helical" evidence="1">
    <location>
        <begin position="114"/>
        <end position="134"/>
    </location>
</feature>
<feature type="transmembrane region" description="Helical" evidence="1">
    <location>
        <begin position="149"/>
        <end position="169"/>
    </location>
</feature>
<feature type="transmembrane region" description="Helical" evidence="1">
    <location>
        <begin position="184"/>
        <end position="204"/>
    </location>
</feature>
<feature type="transmembrane region" description="Helical" evidence="1">
    <location>
        <begin position="237"/>
        <end position="257"/>
    </location>
</feature>
<feature type="transmembrane region" description="Helical" evidence="1">
    <location>
        <begin position="265"/>
        <end position="285"/>
    </location>
</feature>
<feature type="transmembrane region" description="Helical" evidence="1">
    <location>
        <begin position="299"/>
        <end position="319"/>
    </location>
</feature>
<dbReference type="EC" id="7.1.1.-" evidence="1"/>
<dbReference type="EMBL" id="AE016826">
    <property type="protein sequence ID" value="AAO26883.1"/>
    <property type="molecule type" value="Genomic_DNA"/>
</dbReference>
<dbReference type="RefSeq" id="WP_011091284.1">
    <property type="nucleotide sequence ID" value="NC_004545.1"/>
</dbReference>
<dbReference type="SMR" id="Q89AU0"/>
<dbReference type="STRING" id="224915.bbp_149"/>
<dbReference type="KEGG" id="bab:bbp_149"/>
<dbReference type="eggNOG" id="COG1005">
    <property type="taxonomic scope" value="Bacteria"/>
</dbReference>
<dbReference type="HOGENOM" id="CLU_015134_0_1_6"/>
<dbReference type="OrthoDB" id="9803734at2"/>
<dbReference type="Proteomes" id="UP000000601">
    <property type="component" value="Chromosome"/>
</dbReference>
<dbReference type="GO" id="GO:0005886">
    <property type="term" value="C:plasma membrane"/>
    <property type="evidence" value="ECO:0007669"/>
    <property type="project" value="UniProtKB-SubCell"/>
</dbReference>
<dbReference type="GO" id="GO:0003954">
    <property type="term" value="F:NADH dehydrogenase activity"/>
    <property type="evidence" value="ECO:0007669"/>
    <property type="project" value="TreeGrafter"/>
</dbReference>
<dbReference type="GO" id="GO:0016655">
    <property type="term" value="F:oxidoreductase activity, acting on NAD(P)H, quinone or similar compound as acceptor"/>
    <property type="evidence" value="ECO:0007669"/>
    <property type="project" value="UniProtKB-UniRule"/>
</dbReference>
<dbReference type="GO" id="GO:0048038">
    <property type="term" value="F:quinone binding"/>
    <property type="evidence" value="ECO:0007669"/>
    <property type="project" value="UniProtKB-KW"/>
</dbReference>
<dbReference type="GO" id="GO:0009060">
    <property type="term" value="P:aerobic respiration"/>
    <property type="evidence" value="ECO:0007669"/>
    <property type="project" value="TreeGrafter"/>
</dbReference>
<dbReference type="HAMAP" id="MF_01350">
    <property type="entry name" value="NDH1_NuoH"/>
    <property type="match status" value="1"/>
</dbReference>
<dbReference type="InterPro" id="IPR001694">
    <property type="entry name" value="NADH_UbQ_OxRdtase_su1/FPO"/>
</dbReference>
<dbReference type="InterPro" id="IPR018086">
    <property type="entry name" value="NADH_UbQ_OxRdtase_su1_CS"/>
</dbReference>
<dbReference type="NCBIfam" id="NF004740">
    <property type="entry name" value="PRK06076.1-1"/>
    <property type="match status" value="1"/>
</dbReference>
<dbReference type="NCBIfam" id="NF004741">
    <property type="entry name" value="PRK06076.1-2"/>
    <property type="match status" value="1"/>
</dbReference>
<dbReference type="PANTHER" id="PTHR11432">
    <property type="entry name" value="NADH DEHYDROGENASE SUBUNIT 1"/>
    <property type="match status" value="1"/>
</dbReference>
<dbReference type="PANTHER" id="PTHR11432:SF3">
    <property type="entry name" value="NADH-UBIQUINONE OXIDOREDUCTASE CHAIN 1"/>
    <property type="match status" value="1"/>
</dbReference>
<dbReference type="Pfam" id="PF00146">
    <property type="entry name" value="NADHdh"/>
    <property type="match status" value="1"/>
</dbReference>
<dbReference type="PROSITE" id="PS00667">
    <property type="entry name" value="COMPLEX1_ND1_1"/>
    <property type="match status" value="1"/>
</dbReference>
<dbReference type="PROSITE" id="PS00668">
    <property type="entry name" value="COMPLEX1_ND1_2"/>
    <property type="match status" value="1"/>
</dbReference>